<sequence>MKKTQTWIITCIYLQLLLFNPLVKTKGICGKRVTDDVKDVTKLVANLPKDYKIALKYVPGMDVLPSHCWISVMVEQLSVSLTDLLDKFSNISEGLSNYSIIDKLVKIVDDLVECTEGYSFENVKKAPKSPELRLFTPEEFFRIFNRSIDAFKDLETVASKSSECVVSSTLSPDKDSRVSVTKPFMLPPVAASSLRNDSSSSNRKASNSIGDSNLQWAAMALPAFFSLVIGFAFGALYWKKKQPNLTRTVENIQINEEDNEISMLQEKEREFQEV</sequence>
<name>SCF_CANLF</name>
<evidence type="ECO:0000250" key="1"/>
<evidence type="ECO:0000250" key="2">
    <source>
        <dbReference type="UniProtKB" id="P21583"/>
    </source>
</evidence>
<evidence type="ECO:0000255" key="3"/>
<evidence type="ECO:0000305" key="4"/>
<gene>
    <name type="primary">KITLG</name>
    <name type="synonym">MGF</name>
</gene>
<proteinExistence type="evidence at transcript level"/>
<accession>Q06220</accession>
<accession>Q8SPM6</accession>
<keyword id="KW-0130">Cell adhesion</keyword>
<keyword id="KW-1003">Cell membrane</keyword>
<keyword id="KW-0966">Cell projection</keyword>
<keyword id="KW-0963">Cytoplasm</keyword>
<keyword id="KW-0206">Cytoskeleton</keyword>
<keyword id="KW-1015">Disulfide bond</keyword>
<keyword id="KW-0325">Glycoprotein</keyword>
<keyword id="KW-0339">Growth factor</keyword>
<keyword id="KW-0472">Membrane</keyword>
<keyword id="KW-1185">Reference proteome</keyword>
<keyword id="KW-0964">Secreted</keyword>
<keyword id="KW-0732">Signal</keyword>
<keyword id="KW-0812">Transmembrane</keyword>
<keyword id="KW-1133">Transmembrane helix</keyword>
<comment type="function">
    <text>Stimulates the proliferation of mast cells. Able to augment the proliferation of both myeloid and lymphoid hematopoietic progenitors in bone marrow culture. Also mediates cell-cell adhesion. Acts synergistically with other cytokines, probably interleukins.</text>
</comment>
<comment type="subunit">
    <text evidence="4">Homodimer, non-covalently linked.</text>
</comment>
<comment type="subcellular location">
    <subcellularLocation>
        <location evidence="2">Cytoplasm</location>
    </subcellularLocation>
    <subcellularLocation>
        <location evidence="1">Cytoplasm</location>
        <location evidence="1">Cytoskeleton</location>
    </subcellularLocation>
    <subcellularLocation>
        <location evidence="2">Cell membrane</location>
        <topology evidence="1">Single-pass type I membrane protein</topology>
    </subcellularLocation>
    <subcellularLocation>
        <location evidence="2">Cell projection</location>
        <location evidence="2">Lamellipodium</location>
    </subcellularLocation>
    <subcellularLocation>
        <location evidence="2">Cell projection</location>
        <location evidence="2">Filopodium</location>
    </subcellularLocation>
</comment>
<comment type="subcellular location">
    <molecule>Processed kit ligand</molecule>
    <subcellularLocation>
        <location>Secreted</location>
    </subcellularLocation>
</comment>
<comment type="subcellular location">
    <molecule>Soluble KIT ligand</molecule>
    <subcellularLocation>
        <location evidence="1">Secreted</location>
    </subcellularLocation>
</comment>
<comment type="developmental stage">
    <text>Acts in the early stages of hematopoiesis.</text>
</comment>
<comment type="PTM">
    <text evidence="1">A soluble form is produced by proteolytic processing of the extracellular domain.</text>
</comment>
<comment type="similarity">
    <text evidence="4">Belongs to the SCF family.</text>
</comment>
<feature type="signal peptide" evidence="1">
    <location>
        <begin position="1"/>
        <end position="25"/>
    </location>
</feature>
<feature type="chain" id="PRO_0000031909" description="Kit ligand">
    <location>
        <begin position="26"/>
        <end position="274"/>
    </location>
</feature>
<feature type="chain" id="PRO_0000403387" description="Soluble KIT ligand" evidence="1">
    <location>
        <begin position="26"/>
        <end position="191"/>
    </location>
</feature>
<feature type="chain" id="PRO_0000292273" description="Processed kit ligand">
    <location>
        <begin position="26"/>
        <end status="unknown"/>
    </location>
</feature>
<feature type="topological domain" description="Extracellular" evidence="3">
    <location>
        <begin position="26"/>
        <end position="215"/>
    </location>
</feature>
<feature type="transmembrane region" description="Helical" evidence="3">
    <location>
        <begin position="216"/>
        <end position="238"/>
    </location>
</feature>
<feature type="topological domain" description="Cytoplasmic" evidence="3">
    <location>
        <begin position="239"/>
        <end position="274"/>
    </location>
</feature>
<feature type="glycosylation site" description="N-linked (GlcNAc...) asparagine" evidence="3">
    <location>
        <position position="90"/>
    </location>
</feature>
<feature type="glycosylation site" description="N-linked (GlcNAc...) asparagine" evidence="3">
    <location>
        <position position="97"/>
    </location>
</feature>
<feature type="glycosylation site" description="N-linked (GlcNAc...) asparagine" evidence="3">
    <location>
        <position position="145"/>
    </location>
</feature>
<feature type="glycosylation site" description="N-linked (GlcNAc...) asparagine" evidence="3">
    <location>
        <position position="196"/>
    </location>
</feature>
<feature type="disulfide bond" evidence="1">
    <location>
        <begin position="29"/>
        <end position="114"/>
    </location>
</feature>
<feature type="disulfide bond" evidence="1">
    <location>
        <begin position="68"/>
        <end position="164"/>
    </location>
</feature>
<dbReference type="EMBL" id="S53329">
    <property type="protein sequence ID" value="AAB24619.1"/>
    <property type="molecule type" value="mRNA"/>
</dbReference>
<dbReference type="EMBL" id="AY094361">
    <property type="protein sequence ID" value="AAM16280.1"/>
    <property type="molecule type" value="mRNA"/>
</dbReference>
<dbReference type="PIR" id="I46929">
    <property type="entry name" value="I46929"/>
</dbReference>
<dbReference type="RefSeq" id="NP_001012753.1">
    <property type="nucleotide sequence ID" value="NM_001012735.2"/>
</dbReference>
<dbReference type="SMR" id="Q06220"/>
<dbReference type="FunCoup" id="Q06220">
    <property type="interactions" value="261"/>
</dbReference>
<dbReference type="STRING" id="9615.ENSCAFP00000066357"/>
<dbReference type="GlyCosmos" id="Q06220">
    <property type="glycosylation" value="4 sites, No reported glycans"/>
</dbReference>
<dbReference type="PaxDb" id="9612-ENSCAFP00000009149"/>
<dbReference type="Ensembl" id="ENSCAFT00000009854.5">
    <property type="protein sequence ID" value="ENSCAFP00000009149.3"/>
    <property type="gene ID" value="ENSCAFG00000006091.5"/>
</dbReference>
<dbReference type="Ensembl" id="ENSCAFT00030032992.1">
    <property type="protein sequence ID" value="ENSCAFP00030028782.1"/>
    <property type="gene ID" value="ENSCAFG00030017725.1"/>
</dbReference>
<dbReference type="Ensembl" id="ENSCAFT00040028995.1">
    <property type="protein sequence ID" value="ENSCAFP00040025188.1"/>
    <property type="gene ID" value="ENSCAFG00040015574.1"/>
</dbReference>
<dbReference type="Ensembl" id="ENSCAFT00845032796.1">
    <property type="protein sequence ID" value="ENSCAFP00845025667.1"/>
    <property type="gene ID" value="ENSCAFG00845018506.1"/>
</dbReference>
<dbReference type="GeneID" id="403507"/>
<dbReference type="KEGG" id="cfa:403507"/>
<dbReference type="CTD" id="4254"/>
<dbReference type="VEuPathDB" id="HostDB:ENSCAFG00845018506"/>
<dbReference type="VGNC" id="VGNC:42423">
    <property type="gene designation" value="KITLG"/>
</dbReference>
<dbReference type="eggNOG" id="ENOG502QTGT">
    <property type="taxonomic scope" value="Eukaryota"/>
</dbReference>
<dbReference type="GeneTree" id="ENSGT00390000018272"/>
<dbReference type="HOGENOM" id="CLU_090207_0_0_1"/>
<dbReference type="InParanoid" id="Q06220"/>
<dbReference type="OMA" id="TKGICRN"/>
<dbReference type="OrthoDB" id="8445223at2759"/>
<dbReference type="TreeFam" id="TF330811"/>
<dbReference type="Reactome" id="R-CFA-1257604">
    <property type="pathway name" value="PIP3 activates AKT signaling"/>
</dbReference>
<dbReference type="Reactome" id="R-CFA-1433557">
    <property type="pathway name" value="Signaling by SCF-KIT"/>
</dbReference>
<dbReference type="Reactome" id="R-CFA-1433559">
    <property type="pathway name" value="Regulation of KIT signaling"/>
</dbReference>
<dbReference type="Reactome" id="R-CFA-5673001">
    <property type="pathway name" value="RAF/MAP kinase cascade"/>
</dbReference>
<dbReference type="Reactome" id="R-CFA-6811558">
    <property type="pathway name" value="PI5P, PP2A and IER3 Regulate PI3K/AKT Signaling"/>
</dbReference>
<dbReference type="Reactome" id="R-CFA-9856649">
    <property type="pathway name" value="Transcriptional and post-translational regulation of MITF-M expression and activity"/>
</dbReference>
<dbReference type="Proteomes" id="UP000002254">
    <property type="component" value="Chromosome 15"/>
</dbReference>
<dbReference type="Proteomes" id="UP000694429">
    <property type="component" value="Chromosome 15"/>
</dbReference>
<dbReference type="Proteomes" id="UP000694542">
    <property type="component" value="Chromosome 15"/>
</dbReference>
<dbReference type="Proteomes" id="UP000805418">
    <property type="component" value="Chromosome 15"/>
</dbReference>
<dbReference type="Bgee" id="ENSCAFG00000006091">
    <property type="expression patterns" value="Expressed in bone marrow and 44 other cell types or tissues"/>
</dbReference>
<dbReference type="GO" id="GO:0005737">
    <property type="term" value="C:cytoplasm"/>
    <property type="evidence" value="ECO:0000250"/>
    <property type="project" value="UniProtKB"/>
</dbReference>
<dbReference type="GO" id="GO:0005856">
    <property type="term" value="C:cytoskeleton"/>
    <property type="evidence" value="ECO:0007669"/>
    <property type="project" value="UniProtKB-SubCell"/>
</dbReference>
<dbReference type="GO" id="GO:0005615">
    <property type="term" value="C:extracellular space"/>
    <property type="evidence" value="ECO:0007669"/>
    <property type="project" value="Ensembl"/>
</dbReference>
<dbReference type="GO" id="GO:0030175">
    <property type="term" value="C:filopodium"/>
    <property type="evidence" value="ECO:0000250"/>
    <property type="project" value="UniProtKB"/>
</dbReference>
<dbReference type="GO" id="GO:0030027">
    <property type="term" value="C:lamellipodium"/>
    <property type="evidence" value="ECO:0000250"/>
    <property type="project" value="UniProtKB"/>
</dbReference>
<dbReference type="GO" id="GO:0005886">
    <property type="term" value="C:plasma membrane"/>
    <property type="evidence" value="ECO:0000250"/>
    <property type="project" value="UniProtKB"/>
</dbReference>
<dbReference type="GO" id="GO:0005125">
    <property type="term" value="F:cytokine activity"/>
    <property type="evidence" value="ECO:0000318"/>
    <property type="project" value="GO_Central"/>
</dbReference>
<dbReference type="GO" id="GO:0008083">
    <property type="term" value="F:growth factor activity"/>
    <property type="evidence" value="ECO:0007669"/>
    <property type="project" value="UniProtKB-KW"/>
</dbReference>
<dbReference type="GO" id="GO:0005173">
    <property type="term" value="F:stem cell factor receptor binding"/>
    <property type="evidence" value="ECO:0000318"/>
    <property type="project" value="GO_Central"/>
</dbReference>
<dbReference type="GO" id="GO:0007155">
    <property type="term" value="P:cell adhesion"/>
    <property type="evidence" value="ECO:0007669"/>
    <property type="project" value="UniProtKB-KW"/>
</dbReference>
<dbReference type="GO" id="GO:0035234">
    <property type="term" value="P:ectopic germ cell programmed cell death"/>
    <property type="evidence" value="ECO:0007669"/>
    <property type="project" value="Ensembl"/>
</dbReference>
<dbReference type="GO" id="GO:0035162">
    <property type="term" value="P:embryonic hemopoiesis"/>
    <property type="evidence" value="ECO:0007669"/>
    <property type="project" value="Ensembl"/>
</dbReference>
<dbReference type="GO" id="GO:0097192">
    <property type="term" value="P:extrinsic apoptotic signaling pathway in absence of ligand"/>
    <property type="evidence" value="ECO:0007669"/>
    <property type="project" value="Ensembl"/>
</dbReference>
<dbReference type="GO" id="GO:0002244">
    <property type="term" value="P:hematopoietic progenitor cell differentiation"/>
    <property type="evidence" value="ECO:0007669"/>
    <property type="project" value="Ensembl"/>
</dbReference>
<dbReference type="GO" id="GO:0008584">
    <property type="term" value="P:male gonad development"/>
    <property type="evidence" value="ECO:0007669"/>
    <property type="project" value="Ensembl"/>
</dbReference>
<dbReference type="GO" id="GO:0033024">
    <property type="term" value="P:mast cell apoptotic process"/>
    <property type="evidence" value="ECO:0007669"/>
    <property type="project" value="Ensembl"/>
</dbReference>
<dbReference type="GO" id="GO:0097531">
    <property type="term" value="P:mast cell migration"/>
    <property type="evidence" value="ECO:0007669"/>
    <property type="project" value="Ensembl"/>
</dbReference>
<dbReference type="GO" id="GO:0070662">
    <property type="term" value="P:mast cell proliferation"/>
    <property type="evidence" value="ECO:0007669"/>
    <property type="project" value="Ensembl"/>
</dbReference>
<dbReference type="GO" id="GO:0097324">
    <property type="term" value="P:melanocyte migration"/>
    <property type="evidence" value="ECO:0007669"/>
    <property type="project" value="Ensembl"/>
</dbReference>
<dbReference type="GO" id="GO:0002573">
    <property type="term" value="P:myeloid leukocyte differentiation"/>
    <property type="evidence" value="ECO:0007669"/>
    <property type="project" value="Ensembl"/>
</dbReference>
<dbReference type="GO" id="GO:0033026">
    <property type="term" value="P:negative regulation of mast cell apoptotic process"/>
    <property type="evidence" value="ECO:0007669"/>
    <property type="project" value="Ensembl"/>
</dbReference>
<dbReference type="GO" id="GO:0001755">
    <property type="term" value="P:neural crest cell migration"/>
    <property type="evidence" value="ECO:0007669"/>
    <property type="project" value="Ensembl"/>
</dbReference>
<dbReference type="GO" id="GO:0008284">
    <property type="term" value="P:positive regulation of cell population proliferation"/>
    <property type="evidence" value="ECO:0000318"/>
    <property type="project" value="GO_Central"/>
</dbReference>
<dbReference type="GO" id="GO:1901534">
    <property type="term" value="P:positive regulation of hematopoietic progenitor cell differentiation"/>
    <property type="evidence" value="ECO:0007669"/>
    <property type="project" value="Ensembl"/>
</dbReference>
<dbReference type="GO" id="GO:1902035">
    <property type="term" value="P:positive regulation of hematopoietic stem cell proliferation"/>
    <property type="evidence" value="ECO:0007669"/>
    <property type="project" value="Ensembl"/>
</dbReference>
<dbReference type="GO" id="GO:0002687">
    <property type="term" value="P:positive regulation of leukocyte migration"/>
    <property type="evidence" value="ECO:0007669"/>
    <property type="project" value="Ensembl"/>
</dbReference>
<dbReference type="GO" id="GO:0070668">
    <property type="term" value="P:positive regulation of mast cell proliferation"/>
    <property type="evidence" value="ECO:0007669"/>
    <property type="project" value="Ensembl"/>
</dbReference>
<dbReference type="GO" id="GO:0045636">
    <property type="term" value="P:positive regulation of melanocyte differentiation"/>
    <property type="evidence" value="ECO:0007669"/>
    <property type="project" value="Ensembl"/>
</dbReference>
<dbReference type="GO" id="GO:0002763">
    <property type="term" value="P:positive regulation of myeloid leukocyte differentiation"/>
    <property type="evidence" value="ECO:0007669"/>
    <property type="project" value="Ensembl"/>
</dbReference>
<dbReference type="GO" id="GO:0046579">
    <property type="term" value="P:positive regulation of Ras protein signal transduction"/>
    <property type="evidence" value="ECO:0007669"/>
    <property type="project" value="Ensembl"/>
</dbReference>
<dbReference type="GO" id="GO:0042102">
    <property type="term" value="P:positive regulation of T cell proliferation"/>
    <property type="evidence" value="ECO:0007669"/>
    <property type="project" value="Ensembl"/>
</dbReference>
<dbReference type="GO" id="GO:0007265">
    <property type="term" value="P:Ras protein signal transduction"/>
    <property type="evidence" value="ECO:0007669"/>
    <property type="project" value="Ensembl"/>
</dbReference>
<dbReference type="GO" id="GO:0042098">
    <property type="term" value="P:T cell proliferation"/>
    <property type="evidence" value="ECO:0007669"/>
    <property type="project" value="Ensembl"/>
</dbReference>
<dbReference type="FunFam" id="1.20.1250.10:FF:000004">
    <property type="entry name" value="Kit ligand"/>
    <property type="match status" value="1"/>
</dbReference>
<dbReference type="Gene3D" id="1.20.1250.10">
    <property type="match status" value="1"/>
</dbReference>
<dbReference type="InterPro" id="IPR009079">
    <property type="entry name" value="4_helix_cytokine-like_core"/>
</dbReference>
<dbReference type="InterPro" id="IPR003452">
    <property type="entry name" value="SCF"/>
</dbReference>
<dbReference type="PANTHER" id="PTHR11574">
    <property type="entry name" value="KIT LIGAND"/>
    <property type="match status" value="1"/>
</dbReference>
<dbReference type="PANTHER" id="PTHR11574:SF0">
    <property type="entry name" value="KIT LIGAND"/>
    <property type="match status" value="1"/>
</dbReference>
<dbReference type="Pfam" id="PF02404">
    <property type="entry name" value="SCF"/>
    <property type="match status" value="1"/>
</dbReference>
<dbReference type="PIRSF" id="PIRSF015599">
    <property type="entry name" value="SCF"/>
    <property type="match status" value="1"/>
</dbReference>
<dbReference type="SUPFAM" id="SSF47266">
    <property type="entry name" value="4-helical cytokines"/>
    <property type="match status" value="1"/>
</dbReference>
<protein>
    <recommendedName>
        <fullName>Kit ligand</fullName>
    </recommendedName>
    <alternativeName>
        <fullName>Mast cell growth factor</fullName>
        <shortName>MGF</shortName>
    </alternativeName>
    <alternativeName>
        <fullName>Stem cell factor</fullName>
        <shortName>SCF</shortName>
    </alternativeName>
    <alternativeName>
        <fullName>c-Kit ligand</fullName>
    </alternativeName>
    <component>
        <recommendedName>
            <fullName>Soluble KIT ligand</fullName>
            <shortName>sKITLG</shortName>
        </recommendedName>
    </component>
    <component>
        <recommendedName>
            <fullName>Processed kit ligand</fullName>
        </recommendedName>
    </component>
</protein>
<organism>
    <name type="scientific">Canis lupus familiaris</name>
    <name type="common">Dog</name>
    <name type="synonym">Canis familiaris</name>
    <dbReference type="NCBI Taxonomy" id="9615"/>
    <lineage>
        <taxon>Eukaryota</taxon>
        <taxon>Metazoa</taxon>
        <taxon>Chordata</taxon>
        <taxon>Craniata</taxon>
        <taxon>Vertebrata</taxon>
        <taxon>Euteleostomi</taxon>
        <taxon>Mammalia</taxon>
        <taxon>Eutheria</taxon>
        <taxon>Laurasiatheria</taxon>
        <taxon>Carnivora</taxon>
        <taxon>Caniformia</taxon>
        <taxon>Canidae</taxon>
        <taxon>Canis</taxon>
    </lineage>
</organism>
<reference key="1">
    <citation type="journal article" date="1992" name="Exp. Hematol.">
        <title>Canine stem cell factor (c-kit ligand) supports the survival of hematopoietic progenitors in long-term canine marrow culture.</title>
        <authorList>
            <person name="Shull R.M."/>
            <person name="Suggs S.V."/>
            <person name="Langley K.E."/>
            <person name="Okino K.H."/>
            <person name="Jacobsen F.W."/>
            <person name="Martin F.H."/>
        </authorList>
    </citation>
    <scope>NUCLEOTIDE SEQUENCE [MRNA]</scope>
    <source>
        <tissue>T-cell</tissue>
    </source>
</reference>
<reference key="2">
    <citation type="submission" date="2002-04" db="EMBL/GenBank/DDBJ databases">
        <title>MGF sequencing in the dog aids in mapping to CFA15.</title>
        <authorList>
            <person name="Schmutz S.M."/>
            <person name="Berryere T.G."/>
        </authorList>
    </citation>
    <scope>NUCLEOTIDE SEQUENCE [MRNA] OF 17-274</scope>
    <source>
        <tissue>Tail</tissue>
    </source>
</reference>